<comment type="sequence caution" evidence="1">
    <conflict type="frameshift">
        <sequence resource="EMBL-CDS" id="BAA22269"/>
    </conflict>
</comment>
<sequence length="283" mass="30326">MTRSVLVPSSLVREAEDKREATRKLGYVARAAAVFRIDRVVVFPDEDGERQWGGGFVETVLRYAATPPYLRKEAFDTRDELAYAGVLPPLRLSSWTGSDSSGSGSLRQGIVTQVGSEGRVRVNCGMQHPISLHEPPGMAVSEGERVTIRVSSRRPVRAKLVDDPLPGFSVERTGLGDALDRSDAGVRIATSRHGEPLSVASLGGYRERIARDGVTVAFGAPERGLPPMLGVSADAVNESVTDSSADAPARFDAWLNTIPDQGSEVVRTEEAVLATLGSLTLTE</sequence>
<proteinExistence type="predicted"/>
<gene>
    <name type="ordered locus">VNG_1688C</name>
</gene>
<keyword id="KW-1185">Reference proteome</keyword>
<dbReference type="EMBL" id="AB006961">
    <property type="protein sequence ID" value="BAA22268.1"/>
    <property type="status" value="ALT_FRAME"/>
    <property type="molecule type" value="Genomic_DNA"/>
</dbReference>
<dbReference type="EMBL" id="AB006961">
    <property type="protein sequence ID" value="BAA22269.1"/>
    <property type="status" value="ALT_FRAME"/>
    <property type="molecule type" value="Genomic_DNA"/>
</dbReference>
<dbReference type="EMBL" id="AE004437">
    <property type="protein sequence ID" value="AAG19935.1"/>
    <property type="molecule type" value="Genomic_DNA"/>
</dbReference>
<dbReference type="PIR" id="C84321">
    <property type="entry name" value="C84321"/>
</dbReference>
<dbReference type="PIR" id="S43419">
    <property type="entry name" value="S43419"/>
</dbReference>
<dbReference type="PIR" id="T43814">
    <property type="entry name" value="T43814"/>
</dbReference>
<dbReference type="PIR" id="T43815">
    <property type="entry name" value="T43815"/>
</dbReference>
<dbReference type="RefSeq" id="WP_010903233.1">
    <property type="nucleotide sequence ID" value="NC_002607.1"/>
</dbReference>
<dbReference type="SMR" id="Q06847"/>
<dbReference type="STRING" id="64091.VNG_1688C"/>
<dbReference type="PaxDb" id="64091-VNG_1688C"/>
<dbReference type="KEGG" id="hal:VNG_1688C"/>
<dbReference type="PATRIC" id="fig|64091.14.peg.1287"/>
<dbReference type="HOGENOM" id="CLU_017233_1_0_2"/>
<dbReference type="InParanoid" id="Q06847"/>
<dbReference type="OrthoDB" id="4144at2157"/>
<dbReference type="PhylomeDB" id="Q06847"/>
<dbReference type="Proteomes" id="UP000000554">
    <property type="component" value="Chromosome"/>
</dbReference>
<dbReference type="CDD" id="cd18086">
    <property type="entry name" value="HsC9orf114-like"/>
    <property type="match status" value="1"/>
</dbReference>
<dbReference type="Gene3D" id="3.40.1280.10">
    <property type="match status" value="1"/>
</dbReference>
<dbReference type="Gene3D" id="2.40.50.140">
    <property type="entry name" value="Nucleic acid-binding proteins"/>
    <property type="match status" value="1"/>
</dbReference>
<dbReference type="InterPro" id="IPR029028">
    <property type="entry name" value="Alpha/beta_knot_MTases"/>
</dbReference>
<dbReference type="InterPro" id="IPR012340">
    <property type="entry name" value="NA-bd_OB-fold"/>
</dbReference>
<dbReference type="InterPro" id="IPR003750">
    <property type="entry name" value="Put_MeTrfase-C9orf114-like"/>
</dbReference>
<dbReference type="InterPro" id="IPR029026">
    <property type="entry name" value="tRNA_m1G_MTases_N"/>
</dbReference>
<dbReference type="PANTHER" id="PTHR12150">
    <property type="entry name" value="CLASS IV SAM-BINDING METHYLTRANSFERASE-RELATED"/>
    <property type="match status" value="1"/>
</dbReference>
<dbReference type="PANTHER" id="PTHR12150:SF13">
    <property type="entry name" value="METHYLTRANSFERASE C9ORF114-RELATED"/>
    <property type="match status" value="1"/>
</dbReference>
<dbReference type="Pfam" id="PF02598">
    <property type="entry name" value="Methyltrn_RNA_3"/>
    <property type="match status" value="1"/>
</dbReference>
<dbReference type="SUPFAM" id="SSF75217">
    <property type="entry name" value="alpha/beta knot"/>
    <property type="match status" value="1"/>
</dbReference>
<protein>
    <recommendedName>
        <fullName>Uncharacterized protein VNG_1688C</fullName>
    </recommendedName>
</protein>
<organism>
    <name type="scientific">Halobacterium salinarum (strain ATCC 700922 / JCM 11081 / NRC-1)</name>
    <name type="common">Halobacterium halobium</name>
    <dbReference type="NCBI Taxonomy" id="64091"/>
    <lineage>
        <taxon>Archaea</taxon>
        <taxon>Methanobacteriati</taxon>
        <taxon>Methanobacteriota</taxon>
        <taxon>Stenosarchaea group</taxon>
        <taxon>Halobacteria</taxon>
        <taxon>Halobacteriales</taxon>
        <taxon>Halobacteriaceae</taxon>
        <taxon>Halobacterium</taxon>
        <taxon>Halobacterium salinarum NRC-34001</taxon>
    </lineage>
</organism>
<evidence type="ECO:0000305" key="1"/>
<feature type="chain" id="PRO_0000066072" description="Uncharacterized protein VNG_1688C">
    <location>
        <begin position="1"/>
        <end position="283"/>
    </location>
</feature>
<feature type="sequence conflict" description="In Ref. 1; BAA22268." evidence="1" ref="1">
    <original>V</original>
    <variation>L</variation>
    <location>
        <position position="41"/>
    </location>
</feature>
<feature type="sequence conflict" description="In Ref. 1; BAA22268." evidence="1" ref="1">
    <location>
        <position position="164"/>
    </location>
</feature>
<feature type="sequence conflict" description="In Ref. 1." evidence="1" ref="1">
    <original>E</original>
    <variation>R</variation>
    <location>
        <position position="195"/>
    </location>
</feature>
<feature type="sequence conflict" description="In Ref. 1." evidence="1" ref="1">
    <original>S</original>
    <variation>Y</variation>
    <location>
        <position position="243"/>
    </location>
</feature>
<name>Y1688_HALSA</name>
<reference key="1">
    <citation type="journal article" date="1993" name="Biochim. Biophys. Acta">
        <title>Nucleotide sequence of the genes encoding the L3, L4, and L23 equivalent ribosomal proteins from the archaebacterium Halobacterium halobium.</title>
        <authorList>
            <person name="Yuki Y."/>
            <person name="Kanechika R."/>
            <person name="Itoh T."/>
        </authorList>
    </citation>
    <scope>NUCLEOTIDE SEQUENCE [GENOMIC DNA]</scope>
</reference>
<reference key="2">
    <citation type="journal article" date="2000" name="Proc. Natl. Acad. Sci. U.S.A.">
        <title>Genome sequence of Halobacterium species NRC-1.</title>
        <authorList>
            <person name="Ng W.V."/>
            <person name="Kennedy S.P."/>
            <person name="Mahairas G.G."/>
            <person name="Berquist B."/>
            <person name="Pan M."/>
            <person name="Shukla H.D."/>
            <person name="Lasky S.R."/>
            <person name="Baliga N.S."/>
            <person name="Thorsson V."/>
            <person name="Sbrogna J."/>
            <person name="Swartzell S."/>
            <person name="Weir D."/>
            <person name="Hall J."/>
            <person name="Dahl T.A."/>
            <person name="Welti R."/>
            <person name="Goo Y.A."/>
            <person name="Leithauser B."/>
            <person name="Keller K."/>
            <person name="Cruz R."/>
            <person name="Danson M.J."/>
            <person name="Hough D.W."/>
            <person name="Maddocks D.G."/>
            <person name="Jablonski P.E."/>
            <person name="Krebs M.P."/>
            <person name="Angevine C.M."/>
            <person name="Dale H."/>
            <person name="Isenbarger T.A."/>
            <person name="Peck R.F."/>
            <person name="Pohlschroder M."/>
            <person name="Spudich J.L."/>
            <person name="Jung K.-H."/>
            <person name="Alam M."/>
            <person name="Freitas T."/>
            <person name="Hou S."/>
            <person name="Daniels C.J."/>
            <person name="Dennis P.P."/>
            <person name="Omer A.D."/>
            <person name="Ebhardt H."/>
            <person name="Lowe T.M."/>
            <person name="Liang P."/>
            <person name="Riley M."/>
            <person name="Hood L."/>
            <person name="DasSarma S."/>
        </authorList>
    </citation>
    <scope>NUCLEOTIDE SEQUENCE [LARGE SCALE GENOMIC DNA]</scope>
    <source>
        <strain>ATCC 700922 / JCM 11081 / NRC-1</strain>
    </source>
</reference>
<accession>Q06847</accession>
<accession>O24783</accession>
<accession>Q9HPD5</accession>